<evidence type="ECO:0000250" key="1">
    <source>
        <dbReference type="UniProtKB" id="P09960"/>
    </source>
</evidence>
<evidence type="ECO:0000250" key="2">
    <source>
        <dbReference type="UniProtKB" id="Q10740"/>
    </source>
</evidence>
<evidence type="ECO:0000255" key="3">
    <source>
        <dbReference type="PROSITE-ProRule" id="PRU10095"/>
    </source>
</evidence>
<evidence type="ECO:0000305" key="4"/>
<name>LKHA4_EREGS</name>
<comment type="function">
    <text evidence="2">Aminopeptidase that preferentially cleaves di- and tripeptides. Also has low epoxide hydrolase activity (in vitro). Can hydrolyze the epoxide leukotriene LTA(4) but it forms preferentially 5,6-dihydroxy-7,9,11,14-eicosatetraenoic acid rather than the cytokine leukotriene B(4) as the product compared to the homologous mammalian enzyme (in vitro).</text>
</comment>
<comment type="catalytic activity">
    <reaction evidence="2">
        <text>an epoxide + H2O = an ethanediol</text>
        <dbReference type="Rhea" id="RHEA:19037"/>
        <dbReference type="ChEBI" id="CHEBI:15377"/>
        <dbReference type="ChEBI" id="CHEBI:32955"/>
        <dbReference type="ChEBI" id="CHEBI:140594"/>
        <dbReference type="EC" id="3.3.2.10"/>
    </reaction>
</comment>
<comment type="cofactor">
    <cofactor evidence="2">
        <name>Zn(2+)</name>
        <dbReference type="ChEBI" id="CHEBI:29105"/>
    </cofactor>
    <text evidence="2">Binds 1 zinc ion per subunit.</text>
</comment>
<comment type="subcellular location">
    <subcellularLocation>
        <location evidence="2">Cytoplasm</location>
    </subcellularLocation>
    <subcellularLocation>
        <location evidence="2">Nucleus</location>
    </subcellularLocation>
</comment>
<comment type="similarity">
    <text evidence="4">Belongs to the peptidase M1 family.</text>
</comment>
<feature type="chain" id="PRO_0000324917" description="Leucine aminopeptidase 2">
    <location>
        <begin position="1"/>
        <end position="623"/>
    </location>
</feature>
<feature type="active site" description="Proton acceptor" evidence="3">
    <location>
        <position position="296"/>
    </location>
</feature>
<feature type="active site" description="Proton donor" evidence="3">
    <location>
        <position position="382"/>
    </location>
</feature>
<feature type="binding site" evidence="1">
    <location>
        <begin position="140"/>
        <end position="142"/>
    </location>
    <ligand>
        <name>a peptide</name>
        <dbReference type="ChEBI" id="CHEBI:60466"/>
    </ligand>
</feature>
<feature type="binding site" evidence="1">
    <location>
        <begin position="266"/>
        <end position="271"/>
    </location>
    <ligand>
        <name>a peptide</name>
        <dbReference type="ChEBI" id="CHEBI:60466"/>
    </ligand>
</feature>
<feature type="binding site" evidence="3">
    <location>
        <position position="295"/>
    </location>
    <ligand>
        <name>Zn(2+)</name>
        <dbReference type="ChEBI" id="CHEBI:29105"/>
        <note>catalytic</note>
    </ligand>
</feature>
<feature type="binding site" evidence="3">
    <location>
        <position position="299"/>
    </location>
    <ligand>
        <name>Zn(2+)</name>
        <dbReference type="ChEBI" id="CHEBI:29105"/>
        <note>catalytic</note>
    </ligand>
</feature>
<feature type="binding site" evidence="3">
    <location>
        <position position="318"/>
    </location>
    <ligand>
        <name>Zn(2+)</name>
        <dbReference type="ChEBI" id="CHEBI:29105"/>
        <note>catalytic</note>
    </ligand>
</feature>
<reference key="1">
    <citation type="journal article" date="2004" name="Science">
        <title>The Ashbya gossypii genome as a tool for mapping the ancient Saccharomyces cerevisiae genome.</title>
        <authorList>
            <person name="Dietrich F.S."/>
            <person name="Voegeli S."/>
            <person name="Brachat S."/>
            <person name="Lerch A."/>
            <person name="Gates K."/>
            <person name="Steiner S."/>
            <person name="Mohr C."/>
            <person name="Poehlmann R."/>
            <person name="Luedi P."/>
            <person name="Choi S."/>
            <person name="Wing R.A."/>
            <person name="Flavier A."/>
            <person name="Gaffney T.D."/>
            <person name="Philippsen P."/>
        </authorList>
    </citation>
    <scope>NUCLEOTIDE SEQUENCE [LARGE SCALE GENOMIC DNA]</scope>
    <source>
        <strain>ATCC 10895 / CBS 109.51 / FGSC 9923 / NRRL Y-1056</strain>
    </source>
</reference>
<reference key="2">
    <citation type="journal article" date="2013" name="G3 (Bethesda)">
        <title>Genomes of Ashbya fungi isolated from insects reveal four mating-type loci, numerous translocations, lack of transposons, and distinct gene duplications.</title>
        <authorList>
            <person name="Dietrich F.S."/>
            <person name="Voegeli S."/>
            <person name="Kuo S."/>
            <person name="Philippsen P."/>
        </authorList>
    </citation>
    <scope>GENOME REANNOTATION</scope>
    <scope>SEQUENCE REVISION TO 430 AND 448</scope>
    <source>
        <strain>ATCC 10895 / CBS 109.51 / FGSC 9923 / NRRL Y-1056</strain>
    </source>
</reference>
<keyword id="KW-0963">Cytoplasm</keyword>
<keyword id="KW-0378">Hydrolase</keyword>
<keyword id="KW-0479">Metal-binding</keyword>
<keyword id="KW-0482">Metalloprotease</keyword>
<keyword id="KW-0539">Nucleus</keyword>
<keyword id="KW-0645">Protease</keyword>
<keyword id="KW-1185">Reference proteome</keyword>
<keyword id="KW-0862">Zinc</keyword>
<sequence>MKLPAVLEERRAAATDRSTLSNYEDFAVRHTNLELEVAFDERQIRAEVCYDLEQTGKGVAEVHLDTSYVQLECILVDGKRVPWELRERQEPLGSQLVITPEGGLPARFQLTCRSVTTARSTAVQWLGGAQTAGKPYVYTQLESVHARSLVPCFDTPACKSPFTVRVRSPLRAVVAGQEQPGSGKDGVYVFEQPVPIPIYLLGLAAGDIACAPLGPRSNVYCEPALLEAAAGEFGGEIERFLDAAEELLPRYIWGNYNLLVCPSSYPYGGMEVAGTSFISPSVIAYDRSNNDLIVHEMAHSWSGNLITNANWGHFWLNEGWTVYLERRITGALHGEDTRQFSSLLGMAELEVAIRASNGASFALVEDVSESVNPDNVVSLAAYEKGSALLLHLERELGGTAAFDPFIKHYFGKFGGQSLTTWQFLDILFDFFADKREKLERIDWKTWLFAPGMPPKLTYSTSLADDVYDLAEQWLEKAVQLRLPEEFAAEFSGSVLAAFTTAQQILFLNTIIQGGVSPDNTFDWTQHPVAAAALLSVYADTLGKSRNQEIIYRRYNFQLTAGMEDAYPEITTWLGSTGRMKHVRPIYRRLASIDKALAASTFQEHREKYHPICRAAIQADLGLS</sequence>
<dbReference type="EC" id="3.4.11.-"/>
<dbReference type="EC" id="3.3.2.10"/>
<dbReference type="EMBL" id="AE016817">
    <property type="protein sequence ID" value="AAS51687.2"/>
    <property type="molecule type" value="Genomic_DNA"/>
</dbReference>
<dbReference type="RefSeq" id="NP_983863.2">
    <property type="nucleotide sequence ID" value="NM_209216.2"/>
</dbReference>
<dbReference type="SMR" id="Q75B10"/>
<dbReference type="FunCoup" id="Q75B10">
    <property type="interactions" value="1063"/>
</dbReference>
<dbReference type="STRING" id="284811.Q75B10"/>
<dbReference type="MEROPS" id="M01.034"/>
<dbReference type="EnsemblFungi" id="AAS51687">
    <property type="protein sequence ID" value="AAS51687"/>
    <property type="gene ID" value="AGOS_ADL233W"/>
</dbReference>
<dbReference type="GeneID" id="4619998"/>
<dbReference type="KEGG" id="ago:AGOS_ADL233W"/>
<dbReference type="eggNOG" id="KOG1047">
    <property type="taxonomic scope" value="Eukaryota"/>
</dbReference>
<dbReference type="HOGENOM" id="CLU_014505_1_2_1"/>
<dbReference type="InParanoid" id="Q75B10"/>
<dbReference type="OMA" id="CTALQWM"/>
<dbReference type="OrthoDB" id="79562at2759"/>
<dbReference type="Proteomes" id="UP000000591">
    <property type="component" value="Chromosome IV"/>
</dbReference>
<dbReference type="GO" id="GO:0005829">
    <property type="term" value="C:cytosol"/>
    <property type="evidence" value="ECO:0000318"/>
    <property type="project" value="GO_Central"/>
</dbReference>
<dbReference type="GO" id="GO:0000328">
    <property type="term" value="C:fungal-type vacuole lumen"/>
    <property type="evidence" value="ECO:0007669"/>
    <property type="project" value="EnsemblFungi"/>
</dbReference>
<dbReference type="GO" id="GO:0005771">
    <property type="term" value="C:multivesicular body"/>
    <property type="evidence" value="ECO:0007669"/>
    <property type="project" value="EnsemblFungi"/>
</dbReference>
<dbReference type="GO" id="GO:0005634">
    <property type="term" value="C:nucleus"/>
    <property type="evidence" value="ECO:0007669"/>
    <property type="project" value="UniProtKB-SubCell"/>
</dbReference>
<dbReference type="GO" id="GO:0061957">
    <property type="term" value="C:NVT complex"/>
    <property type="evidence" value="ECO:0007669"/>
    <property type="project" value="EnsemblFungi"/>
</dbReference>
<dbReference type="GO" id="GO:0004177">
    <property type="term" value="F:aminopeptidase activity"/>
    <property type="evidence" value="ECO:0000250"/>
    <property type="project" value="UniProtKB"/>
</dbReference>
<dbReference type="GO" id="GO:0004301">
    <property type="term" value="F:epoxide hydrolase activity"/>
    <property type="evidence" value="ECO:0000250"/>
    <property type="project" value="UniProtKB"/>
</dbReference>
<dbReference type="GO" id="GO:0008237">
    <property type="term" value="F:metallopeptidase activity"/>
    <property type="evidence" value="ECO:0007669"/>
    <property type="project" value="UniProtKB-KW"/>
</dbReference>
<dbReference type="GO" id="GO:0008270">
    <property type="term" value="F:zinc ion binding"/>
    <property type="evidence" value="ECO:0000250"/>
    <property type="project" value="UniProtKB"/>
</dbReference>
<dbReference type="GO" id="GO:0120113">
    <property type="term" value="P:cytoplasm to vacuole targeting by the NVT pathway"/>
    <property type="evidence" value="ECO:0007669"/>
    <property type="project" value="EnsemblFungi"/>
</dbReference>
<dbReference type="GO" id="GO:0006629">
    <property type="term" value="P:lipid metabolic process"/>
    <property type="evidence" value="ECO:0007669"/>
    <property type="project" value="EnsemblFungi"/>
</dbReference>
<dbReference type="GO" id="GO:0043171">
    <property type="term" value="P:peptide catabolic process"/>
    <property type="evidence" value="ECO:0000250"/>
    <property type="project" value="UniProtKB"/>
</dbReference>
<dbReference type="GO" id="GO:0030163">
    <property type="term" value="P:protein catabolic process"/>
    <property type="evidence" value="ECO:0007669"/>
    <property type="project" value="EnsemblFungi"/>
</dbReference>
<dbReference type="GO" id="GO:0006508">
    <property type="term" value="P:proteolysis"/>
    <property type="evidence" value="ECO:0007669"/>
    <property type="project" value="UniProtKB-KW"/>
</dbReference>
<dbReference type="CDD" id="cd09599">
    <property type="entry name" value="M1_LTA4H"/>
    <property type="match status" value="1"/>
</dbReference>
<dbReference type="FunFam" id="1.10.390.10:FF:000003">
    <property type="entry name" value="Leukotriene A(4) hydrolase"/>
    <property type="match status" value="1"/>
</dbReference>
<dbReference type="FunFam" id="1.25.40.320:FF:000001">
    <property type="entry name" value="Leukotriene A(4) hydrolase"/>
    <property type="match status" value="1"/>
</dbReference>
<dbReference type="FunFam" id="3.30.2010.30:FF:000001">
    <property type="entry name" value="Leukotriene A(4) hydrolase"/>
    <property type="match status" value="1"/>
</dbReference>
<dbReference type="Gene3D" id="3.30.2010.30">
    <property type="match status" value="1"/>
</dbReference>
<dbReference type="Gene3D" id="1.10.390.10">
    <property type="entry name" value="Neutral Protease Domain 2"/>
    <property type="match status" value="1"/>
</dbReference>
<dbReference type="Gene3D" id="1.25.40.320">
    <property type="entry name" value="Peptidase M1, leukotriene A4 hydrolase/aminopeptidase C-terminal domain"/>
    <property type="match status" value="1"/>
</dbReference>
<dbReference type="Gene3D" id="2.60.40.1730">
    <property type="entry name" value="tricorn interacting facor f3 domain"/>
    <property type="match status" value="1"/>
</dbReference>
<dbReference type="InterPro" id="IPR045357">
    <property type="entry name" value="Aminopeptidase_N-like_N"/>
</dbReference>
<dbReference type="InterPro" id="IPR042097">
    <property type="entry name" value="Aminopeptidase_N-like_N_sf"/>
</dbReference>
<dbReference type="InterPro" id="IPR016024">
    <property type="entry name" value="ARM-type_fold"/>
</dbReference>
<dbReference type="InterPro" id="IPR049980">
    <property type="entry name" value="LTA4H_cat"/>
</dbReference>
<dbReference type="InterPro" id="IPR038502">
    <property type="entry name" value="M1_LTA-4_hydro/amino_C_sf"/>
</dbReference>
<dbReference type="InterPro" id="IPR034015">
    <property type="entry name" value="M1_LTA4H"/>
</dbReference>
<dbReference type="InterPro" id="IPR001930">
    <property type="entry name" value="Peptidase_M1"/>
</dbReference>
<dbReference type="InterPro" id="IPR015211">
    <property type="entry name" value="Peptidase_M1_C"/>
</dbReference>
<dbReference type="InterPro" id="IPR014782">
    <property type="entry name" value="Peptidase_M1_dom"/>
</dbReference>
<dbReference type="InterPro" id="IPR027268">
    <property type="entry name" value="Peptidase_M4/M1_CTD_sf"/>
</dbReference>
<dbReference type="PANTHER" id="PTHR45726">
    <property type="entry name" value="LEUKOTRIENE A-4 HYDROLASE"/>
    <property type="match status" value="1"/>
</dbReference>
<dbReference type="PANTHER" id="PTHR45726:SF3">
    <property type="entry name" value="LEUKOTRIENE A-4 HYDROLASE"/>
    <property type="match status" value="1"/>
</dbReference>
<dbReference type="Pfam" id="PF09127">
    <property type="entry name" value="Leuk-A4-hydro_C"/>
    <property type="match status" value="1"/>
</dbReference>
<dbReference type="Pfam" id="PF01433">
    <property type="entry name" value="Peptidase_M1"/>
    <property type="match status" value="1"/>
</dbReference>
<dbReference type="Pfam" id="PF17900">
    <property type="entry name" value="Peptidase_M1_N"/>
    <property type="match status" value="1"/>
</dbReference>
<dbReference type="PRINTS" id="PR00756">
    <property type="entry name" value="ALADIPTASE"/>
</dbReference>
<dbReference type="SMART" id="SM01263">
    <property type="entry name" value="Leuk-A4-hydro_C"/>
    <property type="match status" value="1"/>
</dbReference>
<dbReference type="SUPFAM" id="SSF48371">
    <property type="entry name" value="ARM repeat"/>
    <property type="match status" value="1"/>
</dbReference>
<dbReference type="SUPFAM" id="SSF63737">
    <property type="entry name" value="Leukotriene A4 hydrolase N-terminal domain"/>
    <property type="match status" value="1"/>
</dbReference>
<dbReference type="SUPFAM" id="SSF55486">
    <property type="entry name" value="Metalloproteases ('zincins'), catalytic domain"/>
    <property type="match status" value="1"/>
</dbReference>
<dbReference type="PROSITE" id="PS00142">
    <property type="entry name" value="ZINC_PROTEASE"/>
    <property type="match status" value="1"/>
</dbReference>
<proteinExistence type="inferred from homology"/>
<gene>
    <name type="ordered locus">ADL233W</name>
    <name type="ORF">AGOS_ADL233W</name>
</gene>
<accession>Q75B10</accession>
<organism>
    <name type="scientific">Eremothecium gossypii (strain ATCC 10895 / CBS 109.51 / FGSC 9923 / NRRL Y-1056)</name>
    <name type="common">Yeast</name>
    <name type="synonym">Ashbya gossypii</name>
    <dbReference type="NCBI Taxonomy" id="284811"/>
    <lineage>
        <taxon>Eukaryota</taxon>
        <taxon>Fungi</taxon>
        <taxon>Dikarya</taxon>
        <taxon>Ascomycota</taxon>
        <taxon>Saccharomycotina</taxon>
        <taxon>Saccharomycetes</taxon>
        <taxon>Saccharomycetales</taxon>
        <taxon>Saccharomycetaceae</taxon>
        <taxon>Eremothecium</taxon>
    </lineage>
</organism>
<protein>
    <recommendedName>
        <fullName>Leucine aminopeptidase 2</fullName>
        <ecNumber>3.4.11.-</ecNumber>
    </recommendedName>
    <alternativeName>
        <fullName>Epoxide hydrolase</fullName>
        <ecNumber>3.3.2.10</ecNumber>
    </alternativeName>
    <alternativeName>
        <fullName>Leukotriene A-4 hydrolase homolog</fullName>
        <shortName>LTA-4 hydrolase</shortName>
    </alternativeName>
</protein>